<accession>Q9RRU8</accession>
<protein>
    <recommendedName>
        <fullName evidence="1">S-ribosylhomocysteine lyase</fullName>
        <ecNumber evidence="1">4.4.1.21</ecNumber>
    </recommendedName>
    <alternativeName>
        <fullName evidence="1">AI-2 synthesis protein</fullName>
    </alternativeName>
    <alternativeName>
        <fullName evidence="1">Autoinducer-2 production protein LuxS</fullName>
    </alternativeName>
</protein>
<evidence type="ECO:0000255" key="1">
    <source>
        <dbReference type="HAMAP-Rule" id="MF_00091"/>
    </source>
</evidence>
<evidence type="ECO:0007829" key="2">
    <source>
        <dbReference type="PDB" id="1VJE"/>
    </source>
</evidence>
<gene>
    <name evidence="1" type="primary">luxS</name>
    <name type="ordered locus">DR_2387</name>
</gene>
<sequence length="158" mass="17395">MPDMANVESFDLDHTKVKAPYVRLAGVKTTPKGDQISKYDLRFLQPNQGAIDPAAIHTLEHLLAGYMRDHLEGVVDVSPMGCRTGMYMAVIGEPDEQGVMKAFEAALKDTAGHDQPIPGVSELECGNYRDHDLAAARQHARDVLDQGLKVQETILLER</sequence>
<name>LUXS_DEIRA</name>
<dbReference type="EC" id="4.4.1.21" evidence="1"/>
<dbReference type="EMBL" id="AE000513">
    <property type="protein sequence ID" value="AAF11932.1"/>
    <property type="molecule type" value="Genomic_DNA"/>
</dbReference>
<dbReference type="PIR" id="D75280">
    <property type="entry name" value="D75280"/>
</dbReference>
<dbReference type="RefSeq" id="NP_296108.1">
    <property type="nucleotide sequence ID" value="NC_001263.1"/>
</dbReference>
<dbReference type="PDB" id="1INN">
    <property type="method" value="X-ray"/>
    <property type="resolution" value="1.80 A"/>
    <property type="chains" value="A/B=1-158"/>
</dbReference>
<dbReference type="PDB" id="1J6V">
    <property type="method" value="X-ray"/>
    <property type="resolution" value="2.10 A"/>
    <property type="chains" value="A=1-158"/>
</dbReference>
<dbReference type="PDB" id="1VGX">
    <property type="method" value="X-ray"/>
    <property type="resolution" value="1.90 A"/>
    <property type="chains" value="A/B=1-158"/>
</dbReference>
<dbReference type="PDB" id="1VH2">
    <property type="method" value="X-ray"/>
    <property type="resolution" value="2.00 A"/>
    <property type="chains" value="A=1-158"/>
</dbReference>
<dbReference type="PDB" id="1VJE">
    <property type="method" value="X-ray"/>
    <property type="resolution" value="1.64 A"/>
    <property type="chains" value="A/B=1-158"/>
</dbReference>
<dbReference type="PDBsum" id="1INN"/>
<dbReference type="PDBsum" id="1J6V"/>
<dbReference type="PDBsum" id="1VGX"/>
<dbReference type="PDBsum" id="1VH2"/>
<dbReference type="PDBsum" id="1VJE"/>
<dbReference type="SMR" id="Q9RRU8"/>
<dbReference type="FunCoup" id="Q9RRU8">
    <property type="interactions" value="99"/>
</dbReference>
<dbReference type="STRING" id="243230.DR_2387"/>
<dbReference type="DrugBank" id="DB02153">
    <property type="generic name" value="3-sulfino-L-alanine"/>
</dbReference>
<dbReference type="PaxDb" id="243230-DR_2387"/>
<dbReference type="EnsemblBacteria" id="AAF11932">
    <property type="protein sequence ID" value="AAF11932"/>
    <property type="gene ID" value="DR_2387"/>
</dbReference>
<dbReference type="KEGG" id="dra:DR_2387"/>
<dbReference type="PATRIC" id="fig|243230.17.peg.2623"/>
<dbReference type="eggNOG" id="COG1854">
    <property type="taxonomic scope" value="Bacteria"/>
</dbReference>
<dbReference type="HOGENOM" id="CLU_107531_2_0_0"/>
<dbReference type="InParanoid" id="Q9RRU8"/>
<dbReference type="OrthoDB" id="9788129at2"/>
<dbReference type="BRENDA" id="4.4.1.21">
    <property type="organism ID" value="1856"/>
</dbReference>
<dbReference type="EvolutionaryTrace" id="Q9RRU8"/>
<dbReference type="Proteomes" id="UP000002524">
    <property type="component" value="Chromosome 1"/>
</dbReference>
<dbReference type="GO" id="GO:0005829">
    <property type="term" value="C:cytosol"/>
    <property type="evidence" value="ECO:0000318"/>
    <property type="project" value="GO_Central"/>
</dbReference>
<dbReference type="GO" id="GO:0005506">
    <property type="term" value="F:iron ion binding"/>
    <property type="evidence" value="ECO:0007669"/>
    <property type="project" value="InterPro"/>
</dbReference>
<dbReference type="GO" id="GO:0043768">
    <property type="term" value="F:S-ribosylhomocysteine lyase activity"/>
    <property type="evidence" value="ECO:0000318"/>
    <property type="project" value="GO_Central"/>
</dbReference>
<dbReference type="GO" id="GO:0019284">
    <property type="term" value="P:L-methionine salvage from S-adenosylmethionine"/>
    <property type="evidence" value="ECO:0000318"/>
    <property type="project" value="GO_Central"/>
</dbReference>
<dbReference type="GO" id="GO:0009372">
    <property type="term" value="P:quorum sensing"/>
    <property type="evidence" value="ECO:0007669"/>
    <property type="project" value="UniProtKB-UniRule"/>
</dbReference>
<dbReference type="Gene3D" id="3.30.1360.80">
    <property type="entry name" value="S-ribosylhomocysteinase (LuxS)"/>
    <property type="match status" value="1"/>
</dbReference>
<dbReference type="HAMAP" id="MF_00091">
    <property type="entry name" value="LuxS"/>
    <property type="match status" value="1"/>
</dbReference>
<dbReference type="InterPro" id="IPR037005">
    <property type="entry name" value="LuxS_sf"/>
</dbReference>
<dbReference type="InterPro" id="IPR011249">
    <property type="entry name" value="Metalloenz_LuxS/M16"/>
</dbReference>
<dbReference type="InterPro" id="IPR003815">
    <property type="entry name" value="S-ribosylhomocysteinase"/>
</dbReference>
<dbReference type="NCBIfam" id="NF002604">
    <property type="entry name" value="PRK02260.1-4"/>
    <property type="match status" value="1"/>
</dbReference>
<dbReference type="NCBIfam" id="NF002606">
    <property type="entry name" value="PRK02260.2-4"/>
    <property type="match status" value="1"/>
</dbReference>
<dbReference type="PANTHER" id="PTHR35799">
    <property type="entry name" value="S-RIBOSYLHOMOCYSTEINE LYASE"/>
    <property type="match status" value="1"/>
</dbReference>
<dbReference type="PANTHER" id="PTHR35799:SF1">
    <property type="entry name" value="S-RIBOSYLHOMOCYSTEINE LYASE"/>
    <property type="match status" value="1"/>
</dbReference>
<dbReference type="Pfam" id="PF02664">
    <property type="entry name" value="LuxS"/>
    <property type="match status" value="1"/>
</dbReference>
<dbReference type="PIRSF" id="PIRSF006160">
    <property type="entry name" value="AI2"/>
    <property type="match status" value="1"/>
</dbReference>
<dbReference type="PRINTS" id="PR01487">
    <property type="entry name" value="LUXSPROTEIN"/>
</dbReference>
<dbReference type="SUPFAM" id="SSF63411">
    <property type="entry name" value="LuxS/MPP-like metallohydrolase"/>
    <property type="match status" value="1"/>
</dbReference>
<keyword id="KW-0002">3D-structure</keyword>
<keyword id="KW-0071">Autoinducer synthesis</keyword>
<keyword id="KW-0408">Iron</keyword>
<keyword id="KW-0456">Lyase</keyword>
<keyword id="KW-0479">Metal-binding</keyword>
<keyword id="KW-0673">Quorum sensing</keyword>
<keyword id="KW-1185">Reference proteome</keyword>
<feature type="chain" id="PRO_0000172218" description="S-ribosylhomocysteine lyase">
    <location>
        <begin position="1"/>
        <end position="158"/>
    </location>
</feature>
<feature type="binding site">
    <location>
        <position position="57"/>
    </location>
    <ligand>
        <name>Fe cation</name>
        <dbReference type="ChEBI" id="CHEBI:24875"/>
    </ligand>
</feature>
<feature type="binding site">
    <location>
        <position position="61"/>
    </location>
    <ligand>
        <name>Fe cation</name>
        <dbReference type="ChEBI" id="CHEBI:24875"/>
    </ligand>
</feature>
<feature type="binding site">
    <location>
        <position position="125"/>
    </location>
    <ligand>
        <name>Fe cation</name>
        <dbReference type="ChEBI" id="CHEBI:24875"/>
    </ligand>
</feature>
<feature type="helix" evidence="2">
    <location>
        <begin position="9"/>
        <end position="11"/>
    </location>
</feature>
<feature type="turn" evidence="2">
    <location>
        <begin position="14"/>
        <end position="16"/>
    </location>
</feature>
<feature type="strand" evidence="2">
    <location>
        <begin position="19"/>
        <end position="29"/>
    </location>
</feature>
<feature type="strand" evidence="2">
    <location>
        <begin position="35"/>
        <end position="42"/>
    </location>
</feature>
<feature type="helix" evidence="2">
    <location>
        <begin position="53"/>
        <end position="70"/>
    </location>
</feature>
<feature type="strand" evidence="2">
    <location>
        <begin position="74"/>
        <end position="79"/>
    </location>
</feature>
<feature type="strand" evidence="2">
    <location>
        <begin position="83"/>
        <end position="93"/>
    </location>
</feature>
<feature type="helix" evidence="2">
    <location>
        <begin position="96"/>
        <end position="111"/>
    </location>
</feature>
<feature type="turn" evidence="2">
    <location>
        <begin position="122"/>
        <end position="124"/>
    </location>
</feature>
<feature type="turn" evidence="2">
    <location>
        <begin position="126"/>
        <end position="129"/>
    </location>
</feature>
<feature type="helix" evidence="2">
    <location>
        <begin position="133"/>
        <end position="146"/>
    </location>
</feature>
<comment type="function">
    <text>Involved in the synthesis of autoinducer 2 (AI-2) which is secreted by bacteria and is used to communicate both the cell density and the metabolic potential of the environment. The regulation of gene expression in response to changes in cell density is called quorum sensing. Catalyzes the transformation of S-ribosylhomocysteine (RHC) to homocysteine (HC) and 4,5-dihydroxy-2,3-pentadione (DPD).</text>
</comment>
<comment type="catalytic activity">
    <reaction evidence="1">
        <text>S-(5-deoxy-D-ribos-5-yl)-L-homocysteine = (S)-4,5-dihydroxypentane-2,3-dione + L-homocysteine</text>
        <dbReference type="Rhea" id="RHEA:17753"/>
        <dbReference type="ChEBI" id="CHEBI:29484"/>
        <dbReference type="ChEBI" id="CHEBI:58195"/>
        <dbReference type="ChEBI" id="CHEBI:58199"/>
        <dbReference type="EC" id="4.4.1.21"/>
    </reaction>
</comment>
<comment type="cofactor">
    <cofactor>
        <name>Fe cation</name>
        <dbReference type="ChEBI" id="CHEBI:24875"/>
    </cofactor>
    <text>Binds 1 Fe cation per subunit.</text>
</comment>
<comment type="subunit">
    <text>Homodimer.</text>
</comment>
<comment type="similarity">
    <text evidence="1">Belongs to the LuxS family.</text>
</comment>
<reference key="1">
    <citation type="journal article" date="1999" name="Science">
        <title>Genome sequence of the radioresistant bacterium Deinococcus radiodurans R1.</title>
        <authorList>
            <person name="White O."/>
            <person name="Eisen J.A."/>
            <person name="Heidelberg J.F."/>
            <person name="Hickey E.K."/>
            <person name="Peterson J.D."/>
            <person name="Dodson R.J."/>
            <person name="Haft D.H."/>
            <person name="Gwinn M.L."/>
            <person name="Nelson W.C."/>
            <person name="Richardson D.L."/>
            <person name="Moffat K.S."/>
            <person name="Qin H."/>
            <person name="Jiang L."/>
            <person name="Pamphile W."/>
            <person name="Crosby M."/>
            <person name="Shen M."/>
            <person name="Vamathevan J.J."/>
            <person name="Lam P."/>
            <person name="McDonald L.A."/>
            <person name="Utterback T.R."/>
            <person name="Zalewski C."/>
            <person name="Makarova K.S."/>
            <person name="Aravind L."/>
            <person name="Daly M.J."/>
            <person name="Minton K.W."/>
            <person name="Fleischmann R.D."/>
            <person name="Ketchum K.A."/>
            <person name="Nelson K.E."/>
            <person name="Salzberg S.L."/>
            <person name="Smith H.O."/>
            <person name="Venter J.C."/>
            <person name="Fraser C.M."/>
        </authorList>
    </citation>
    <scope>NUCLEOTIDE SEQUENCE [LARGE SCALE GENOMIC DNA]</scope>
    <source>
        <strain>ATCC 13939 / DSM 20539 / JCM 16871 / CCUG 27074 / LMG 4051 / NBRC 15346 / NCIMB 9279 / VKM B-1422 / R1</strain>
    </source>
</reference>
<reference key="2">
    <citation type="journal article" date="2001" name="Structure">
        <title>A structural genomics approach to the study of quorum sensing: crystal structures of three LuxS orthologs.</title>
        <authorList>
            <person name="Lewis H.A."/>
            <person name="Furlong E.B."/>
            <person name="Laubert B."/>
            <person name="Eroshkina G.A."/>
            <person name="Batiyenko Y."/>
            <person name="Adams J.M."/>
            <person name="Bergseid M.G."/>
            <person name="Marsh C.D."/>
            <person name="Peat T.S."/>
            <person name="Sanderson W.E."/>
            <person name="Sauder J.M."/>
            <person name="Buchanan S.G."/>
        </authorList>
    </citation>
    <scope>X-RAY CRYSTALLOGRAPHY (1.8 ANGSTROMS)</scope>
</reference>
<organism>
    <name type="scientific">Deinococcus radiodurans (strain ATCC 13939 / DSM 20539 / JCM 16871 / CCUG 27074 / LMG 4051 / NBRC 15346 / NCIMB 9279 / VKM B-1422 / R1)</name>
    <dbReference type="NCBI Taxonomy" id="243230"/>
    <lineage>
        <taxon>Bacteria</taxon>
        <taxon>Thermotogati</taxon>
        <taxon>Deinococcota</taxon>
        <taxon>Deinococci</taxon>
        <taxon>Deinococcales</taxon>
        <taxon>Deinococcaceae</taxon>
        <taxon>Deinococcus</taxon>
    </lineage>
</organism>
<proteinExistence type="evidence at protein level"/>